<organism>
    <name type="scientific">Pseudomonas syringae pv. syringae (strain B728a)</name>
    <dbReference type="NCBI Taxonomy" id="205918"/>
    <lineage>
        <taxon>Bacteria</taxon>
        <taxon>Pseudomonadati</taxon>
        <taxon>Pseudomonadota</taxon>
        <taxon>Gammaproteobacteria</taxon>
        <taxon>Pseudomonadales</taxon>
        <taxon>Pseudomonadaceae</taxon>
        <taxon>Pseudomonas</taxon>
        <taxon>Pseudomonas syringae</taxon>
    </lineage>
</organism>
<dbReference type="EC" id="2.7.4.6" evidence="1"/>
<dbReference type="EMBL" id="CP000075">
    <property type="protein sequence ID" value="AAY36295.1"/>
    <property type="molecule type" value="Genomic_DNA"/>
</dbReference>
<dbReference type="RefSeq" id="WP_002552482.1">
    <property type="nucleotide sequence ID" value="NC_007005.1"/>
</dbReference>
<dbReference type="RefSeq" id="YP_234333.1">
    <property type="nucleotide sequence ID" value="NC_007005.1"/>
</dbReference>
<dbReference type="SMR" id="Q4ZX27"/>
<dbReference type="STRING" id="205918.Psyr_1244"/>
<dbReference type="GeneID" id="96217648"/>
<dbReference type="KEGG" id="psb:Psyr_1244"/>
<dbReference type="PATRIC" id="fig|205918.7.peg.1276"/>
<dbReference type="eggNOG" id="COG0105">
    <property type="taxonomic scope" value="Bacteria"/>
</dbReference>
<dbReference type="HOGENOM" id="CLU_060216_8_1_6"/>
<dbReference type="OrthoDB" id="9801161at2"/>
<dbReference type="Proteomes" id="UP000000426">
    <property type="component" value="Chromosome"/>
</dbReference>
<dbReference type="GO" id="GO:0005737">
    <property type="term" value="C:cytoplasm"/>
    <property type="evidence" value="ECO:0007669"/>
    <property type="project" value="UniProtKB-SubCell"/>
</dbReference>
<dbReference type="GO" id="GO:0005524">
    <property type="term" value="F:ATP binding"/>
    <property type="evidence" value="ECO:0007669"/>
    <property type="project" value="UniProtKB-UniRule"/>
</dbReference>
<dbReference type="GO" id="GO:0046872">
    <property type="term" value="F:metal ion binding"/>
    <property type="evidence" value="ECO:0007669"/>
    <property type="project" value="UniProtKB-KW"/>
</dbReference>
<dbReference type="GO" id="GO:0004550">
    <property type="term" value="F:nucleoside diphosphate kinase activity"/>
    <property type="evidence" value="ECO:0007669"/>
    <property type="project" value="UniProtKB-UniRule"/>
</dbReference>
<dbReference type="GO" id="GO:0006241">
    <property type="term" value="P:CTP biosynthetic process"/>
    <property type="evidence" value="ECO:0007669"/>
    <property type="project" value="UniProtKB-UniRule"/>
</dbReference>
<dbReference type="GO" id="GO:0006183">
    <property type="term" value="P:GTP biosynthetic process"/>
    <property type="evidence" value="ECO:0007669"/>
    <property type="project" value="UniProtKB-UniRule"/>
</dbReference>
<dbReference type="GO" id="GO:0006228">
    <property type="term" value="P:UTP biosynthetic process"/>
    <property type="evidence" value="ECO:0007669"/>
    <property type="project" value="UniProtKB-UniRule"/>
</dbReference>
<dbReference type="CDD" id="cd04413">
    <property type="entry name" value="NDPk_I"/>
    <property type="match status" value="1"/>
</dbReference>
<dbReference type="FunFam" id="3.30.70.141:FF:000001">
    <property type="entry name" value="Nucleoside diphosphate kinase"/>
    <property type="match status" value="1"/>
</dbReference>
<dbReference type="Gene3D" id="3.30.70.141">
    <property type="entry name" value="Nucleoside diphosphate kinase-like domain"/>
    <property type="match status" value="1"/>
</dbReference>
<dbReference type="HAMAP" id="MF_00451">
    <property type="entry name" value="NDP_kinase"/>
    <property type="match status" value="1"/>
</dbReference>
<dbReference type="InterPro" id="IPR034907">
    <property type="entry name" value="NDK-like_dom"/>
</dbReference>
<dbReference type="InterPro" id="IPR036850">
    <property type="entry name" value="NDK-like_dom_sf"/>
</dbReference>
<dbReference type="InterPro" id="IPR001564">
    <property type="entry name" value="Nucleoside_diP_kinase"/>
</dbReference>
<dbReference type="InterPro" id="IPR023005">
    <property type="entry name" value="Nucleoside_diP_kinase_AS"/>
</dbReference>
<dbReference type="NCBIfam" id="NF001908">
    <property type="entry name" value="PRK00668.1"/>
    <property type="match status" value="1"/>
</dbReference>
<dbReference type="PANTHER" id="PTHR46161">
    <property type="entry name" value="NUCLEOSIDE DIPHOSPHATE KINASE"/>
    <property type="match status" value="1"/>
</dbReference>
<dbReference type="PANTHER" id="PTHR46161:SF3">
    <property type="entry name" value="NUCLEOSIDE DIPHOSPHATE KINASE DDB_G0292928-RELATED"/>
    <property type="match status" value="1"/>
</dbReference>
<dbReference type="Pfam" id="PF00334">
    <property type="entry name" value="NDK"/>
    <property type="match status" value="1"/>
</dbReference>
<dbReference type="PRINTS" id="PR01243">
    <property type="entry name" value="NUCDPKINASE"/>
</dbReference>
<dbReference type="SMART" id="SM00562">
    <property type="entry name" value="NDK"/>
    <property type="match status" value="1"/>
</dbReference>
<dbReference type="SUPFAM" id="SSF54919">
    <property type="entry name" value="Nucleoside diphosphate kinase, NDK"/>
    <property type="match status" value="1"/>
</dbReference>
<dbReference type="PROSITE" id="PS00469">
    <property type="entry name" value="NDPK"/>
    <property type="match status" value="1"/>
</dbReference>
<dbReference type="PROSITE" id="PS51374">
    <property type="entry name" value="NDPK_LIKE"/>
    <property type="match status" value="1"/>
</dbReference>
<feature type="chain" id="PRO_0000226573" description="Nucleoside diphosphate kinase">
    <location>
        <begin position="1"/>
        <end position="141"/>
    </location>
</feature>
<feature type="active site" description="Pros-phosphohistidine intermediate" evidence="1">
    <location>
        <position position="117"/>
    </location>
</feature>
<feature type="binding site" evidence="1">
    <location>
        <position position="11"/>
    </location>
    <ligand>
        <name>ATP</name>
        <dbReference type="ChEBI" id="CHEBI:30616"/>
    </ligand>
</feature>
<feature type="binding site" evidence="1">
    <location>
        <position position="59"/>
    </location>
    <ligand>
        <name>ATP</name>
        <dbReference type="ChEBI" id="CHEBI:30616"/>
    </ligand>
</feature>
<feature type="binding site" evidence="1">
    <location>
        <position position="87"/>
    </location>
    <ligand>
        <name>ATP</name>
        <dbReference type="ChEBI" id="CHEBI:30616"/>
    </ligand>
</feature>
<feature type="binding site" evidence="1">
    <location>
        <position position="93"/>
    </location>
    <ligand>
        <name>ATP</name>
        <dbReference type="ChEBI" id="CHEBI:30616"/>
    </ligand>
</feature>
<feature type="binding site" evidence="1">
    <location>
        <position position="104"/>
    </location>
    <ligand>
        <name>ATP</name>
        <dbReference type="ChEBI" id="CHEBI:30616"/>
    </ligand>
</feature>
<feature type="binding site" evidence="1">
    <location>
        <position position="114"/>
    </location>
    <ligand>
        <name>ATP</name>
        <dbReference type="ChEBI" id="CHEBI:30616"/>
    </ligand>
</feature>
<accession>Q4ZX27</accession>
<keyword id="KW-0067">ATP-binding</keyword>
<keyword id="KW-0963">Cytoplasm</keyword>
<keyword id="KW-0418">Kinase</keyword>
<keyword id="KW-0460">Magnesium</keyword>
<keyword id="KW-0479">Metal-binding</keyword>
<keyword id="KW-0546">Nucleotide metabolism</keyword>
<keyword id="KW-0547">Nucleotide-binding</keyword>
<keyword id="KW-0597">Phosphoprotein</keyword>
<keyword id="KW-0808">Transferase</keyword>
<proteinExistence type="inferred from homology"/>
<sequence length="141" mass="14951">MAVQRTFSIIKPDAVAKNVIGEITTRFEKAGLRVVASKLKQLSKAEAEGFYAEHSARGFFGDLVAFMISGPVVVQVLEGENAIALNRELMGATNPKEAAAGTIRADFADSIDANAVHGSDSEAAAAREISYFFAATEVTAR</sequence>
<reference key="1">
    <citation type="journal article" date="2005" name="Proc. Natl. Acad. Sci. U.S.A.">
        <title>Comparison of the complete genome sequences of Pseudomonas syringae pv. syringae B728a and pv. tomato DC3000.</title>
        <authorList>
            <person name="Feil H."/>
            <person name="Feil W.S."/>
            <person name="Chain P."/>
            <person name="Larimer F."/>
            <person name="Dibartolo G."/>
            <person name="Copeland A."/>
            <person name="Lykidis A."/>
            <person name="Trong S."/>
            <person name="Nolan M."/>
            <person name="Goltsman E."/>
            <person name="Thiel J."/>
            <person name="Malfatti S."/>
            <person name="Loper J.E."/>
            <person name="Lapidus A."/>
            <person name="Detter J.C."/>
            <person name="Land M."/>
            <person name="Richardson P.M."/>
            <person name="Kyrpides N.C."/>
            <person name="Ivanova N."/>
            <person name="Lindow S.E."/>
        </authorList>
    </citation>
    <scope>NUCLEOTIDE SEQUENCE [LARGE SCALE GENOMIC DNA]</scope>
    <source>
        <strain>B728a</strain>
    </source>
</reference>
<name>NDK_PSEU2</name>
<gene>
    <name evidence="1" type="primary">ndk</name>
    <name type="ordered locus">Psyr_1244</name>
</gene>
<protein>
    <recommendedName>
        <fullName evidence="1">Nucleoside diphosphate kinase</fullName>
        <shortName evidence="1">NDK</shortName>
        <shortName evidence="1">NDP kinase</shortName>
        <ecNumber evidence="1">2.7.4.6</ecNumber>
    </recommendedName>
    <alternativeName>
        <fullName evidence="1">Nucleoside-2-P kinase</fullName>
    </alternativeName>
</protein>
<comment type="function">
    <text evidence="1">Major role in the synthesis of nucleoside triphosphates other than ATP. The ATP gamma phosphate is transferred to the NDP beta phosphate via a ping-pong mechanism, using a phosphorylated active-site intermediate.</text>
</comment>
<comment type="catalytic activity">
    <reaction evidence="1">
        <text>a 2'-deoxyribonucleoside 5'-diphosphate + ATP = a 2'-deoxyribonucleoside 5'-triphosphate + ADP</text>
        <dbReference type="Rhea" id="RHEA:44640"/>
        <dbReference type="ChEBI" id="CHEBI:30616"/>
        <dbReference type="ChEBI" id="CHEBI:61560"/>
        <dbReference type="ChEBI" id="CHEBI:73316"/>
        <dbReference type="ChEBI" id="CHEBI:456216"/>
        <dbReference type="EC" id="2.7.4.6"/>
    </reaction>
</comment>
<comment type="catalytic activity">
    <reaction evidence="1">
        <text>a ribonucleoside 5'-diphosphate + ATP = a ribonucleoside 5'-triphosphate + ADP</text>
        <dbReference type="Rhea" id="RHEA:18113"/>
        <dbReference type="ChEBI" id="CHEBI:30616"/>
        <dbReference type="ChEBI" id="CHEBI:57930"/>
        <dbReference type="ChEBI" id="CHEBI:61557"/>
        <dbReference type="ChEBI" id="CHEBI:456216"/>
        <dbReference type="EC" id="2.7.4.6"/>
    </reaction>
</comment>
<comment type="cofactor">
    <cofactor evidence="1">
        <name>Mg(2+)</name>
        <dbReference type="ChEBI" id="CHEBI:18420"/>
    </cofactor>
</comment>
<comment type="subunit">
    <text evidence="1">Homotetramer.</text>
</comment>
<comment type="subcellular location">
    <subcellularLocation>
        <location evidence="1">Cytoplasm</location>
    </subcellularLocation>
</comment>
<comment type="similarity">
    <text evidence="1">Belongs to the NDK family.</text>
</comment>
<evidence type="ECO:0000255" key="1">
    <source>
        <dbReference type="HAMAP-Rule" id="MF_00451"/>
    </source>
</evidence>